<sequence length="777" mass="85938">MQCLFLEERIKKEGCVVLFAEAFRPSFANIQGFLTTIAEPVSRLSLMHEYRMTYFSLGAAASASISVSEVIQFLDDHVYFFRDKCFASYRESVCAFAEMYMSRCNLARVVIDESRTLLECKDIVTAKTLLKDRVVRSLCCQPKETVGEDACPHFLLKSRAAARVVAERCVLLGYPLQQQYEYEKDTSIRNVNIALKSQTRPRPYQIAAVDAAASDGALRSGCIVLPCGSGKTLVGIMLLCKVKKPTLILCAGGVSVEQWRNQILEFASVCAPANNEEGDPSNSTTGEKVRTAAVGAARISCLTGKQKDEITDETDIVLTTYSMLVTAHKAQARCQVEGFEMNADGRGRNPRRANPKERLFQPYGLLIMDEVHMMPADAYKDSLGFINAKGVVGLTATYVREDSKIRDLFHLVGPKLFDISWERLASSGYLAHVTCIEVLTPLARRFSLEYLERSSELTSPQHGTPLLVMLAAANPNKMLCVMEIVKRHVAESSKILVFCDHIMLLKEYSKLLGAPVVCGDTPHRERLMIFSDFQSTSKVNVVCLSRVGDVSVNLPSANVVVQVSSHGGSRRQEAQRLGRILRPKEKASNGKPTDAWFYTVISTDTVEMSYAAHRTAFLVDQGYTCSVTEFNPDGAPEAAVEGVDDTAPGDVVSIRQAKLRGTFKKQELKCSVASPTAQGSVNPRSLDYQEKLLCRVVASWELDYQNATSQQNEPGVANDTATGLIDKKMKRARDETAEDIKREWNSGAQTTQPRGDFCRLPLQRLVGANDDVVYHES</sequence>
<name>XPBR_TRYB2</name>
<evidence type="ECO:0000250" key="1">
    <source>
        <dbReference type="UniProtKB" id="P19447"/>
    </source>
</evidence>
<evidence type="ECO:0000250" key="2">
    <source>
        <dbReference type="UniProtKB" id="Q00578"/>
    </source>
</evidence>
<evidence type="ECO:0000255" key="3">
    <source>
        <dbReference type="PROSITE-ProRule" id="PRU00541"/>
    </source>
</evidence>
<evidence type="ECO:0000255" key="4">
    <source>
        <dbReference type="PROSITE-ProRule" id="PRU00542"/>
    </source>
</evidence>
<evidence type="ECO:0000269" key="5">
    <source>
    </source>
</evidence>
<evidence type="ECO:0000303" key="6">
    <source>
    </source>
</evidence>
<evidence type="ECO:0000305" key="7"/>
<comment type="function">
    <text evidence="2 5">ATP-dependent 3'-5' DNA helicase/translocase; binds dsDNA rather than ssDNA, unzipping it in a translocase rather than classical helicase activity (By similarity). Involved in nucleotide excision repair (NER) of damaged DNA (PubMed:24134817). XPB-R is a paralog of XBP, but is not a component of the TFIIH basal transcription factor and is dispensable for RNA polymerase II transcription (PubMed:24134817).</text>
</comment>
<comment type="catalytic activity">
    <reaction evidence="1">
        <text>Couples ATP hydrolysis with the unwinding of duplex DNA by translocating in the 3'-5' direction.</text>
        <dbReference type="EC" id="5.6.2.4"/>
    </reaction>
</comment>
<comment type="catalytic activity">
    <reaction evidence="1">
        <text>ATP + H2O = ADP + phosphate + H(+)</text>
        <dbReference type="Rhea" id="RHEA:13065"/>
        <dbReference type="ChEBI" id="CHEBI:15377"/>
        <dbReference type="ChEBI" id="CHEBI:15378"/>
        <dbReference type="ChEBI" id="CHEBI:30616"/>
        <dbReference type="ChEBI" id="CHEBI:43474"/>
        <dbReference type="ChEBI" id="CHEBI:456216"/>
        <dbReference type="EC" id="5.6.2.4"/>
    </reaction>
</comment>
<comment type="disruption phenotype">
    <text evidence="5">Mutants are much less tolerant than wild-type cells to UV light- and cisplatin-induced DNA damage.</text>
</comment>
<comment type="similarity">
    <text evidence="7">Belongs to the helicase family. RAD25/XPB subfamily.</text>
</comment>
<organism>
    <name type="scientific">Trypanosoma brucei brucei (strain 927/4 GUTat10.1)</name>
    <dbReference type="NCBI Taxonomy" id="185431"/>
    <lineage>
        <taxon>Eukaryota</taxon>
        <taxon>Discoba</taxon>
        <taxon>Euglenozoa</taxon>
        <taxon>Kinetoplastea</taxon>
        <taxon>Metakinetoplastina</taxon>
        <taxon>Trypanosomatida</taxon>
        <taxon>Trypanosomatidae</taxon>
        <taxon>Trypanosoma</taxon>
    </lineage>
</organism>
<reference key="1">
    <citation type="journal article" date="2005" name="Science">
        <title>The genome of the African trypanosome Trypanosoma brucei.</title>
        <authorList>
            <person name="Berriman M."/>
            <person name="Ghedin E."/>
            <person name="Hertz-Fowler C."/>
            <person name="Blandin G."/>
            <person name="Renauld H."/>
            <person name="Bartholomeu D.C."/>
            <person name="Lennard N.J."/>
            <person name="Caler E."/>
            <person name="Hamlin N.E."/>
            <person name="Haas B."/>
            <person name="Bohme U."/>
            <person name="Hannick L."/>
            <person name="Aslett M.A."/>
            <person name="Shallom J."/>
            <person name="Marcello L."/>
            <person name="Hou L."/>
            <person name="Wickstead B."/>
            <person name="Alsmark U.C.M."/>
            <person name="Arrowsmith C."/>
            <person name="Atkin R.J."/>
            <person name="Barron A.J."/>
            <person name="Bringaud F."/>
            <person name="Brooks K."/>
            <person name="Carrington M."/>
            <person name="Cherevach I."/>
            <person name="Chillingworth T.J."/>
            <person name="Churcher C."/>
            <person name="Clark L.N."/>
            <person name="Corton C.H."/>
            <person name="Cronin A."/>
            <person name="Davies R.M."/>
            <person name="Doggett J."/>
            <person name="Djikeng A."/>
            <person name="Feldblyum T."/>
            <person name="Field M.C."/>
            <person name="Fraser A."/>
            <person name="Goodhead I."/>
            <person name="Hance Z."/>
            <person name="Harper D."/>
            <person name="Harris B.R."/>
            <person name="Hauser H."/>
            <person name="Hostetler J."/>
            <person name="Ivens A."/>
            <person name="Jagels K."/>
            <person name="Johnson D."/>
            <person name="Johnson J."/>
            <person name="Jones K."/>
            <person name="Kerhornou A.X."/>
            <person name="Koo H."/>
            <person name="Larke N."/>
            <person name="Landfear S."/>
            <person name="Larkin C."/>
            <person name="Leech V."/>
            <person name="Line A."/>
            <person name="Lord A."/>
            <person name="Macleod A."/>
            <person name="Mooney P.J."/>
            <person name="Moule S."/>
            <person name="Martin D.M."/>
            <person name="Morgan G.W."/>
            <person name="Mungall K."/>
            <person name="Norbertczak H."/>
            <person name="Ormond D."/>
            <person name="Pai G."/>
            <person name="Peacock C.S."/>
            <person name="Peterson J."/>
            <person name="Quail M.A."/>
            <person name="Rabbinowitsch E."/>
            <person name="Rajandream M.A."/>
            <person name="Reitter C."/>
            <person name="Salzberg S.L."/>
            <person name="Sanders M."/>
            <person name="Schobel S."/>
            <person name="Sharp S."/>
            <person name="Simmonds M."/>
            <person name="Simpson A.J."/>
            <person name="Tallon L."/>
            <person name="Turner C.M."/>
            <person name="Tait A."/>
            <person name="Tivey A.R."/>
            <person name="Van Aken S."/>
            <person name="Walker D."/>
            <person name="Wanless D."/>
            <person name="Wang S."/>
            <person name="White B."/>
            <person name="White O."/>
            <person name="Whitehead S."/>
            <person name="Woodward J."/>
            <person name="Wortman J."/>
            <person name="Adams M.D."/>
            <person name="Embley T.M."/>
            <person name="Gull K."/>
            <person name="Ullu E."/>
            <person name="Barry J.D."/>
            <person name="Fairlamb A.H."/>
            <person name="Opperdoes F."/>
            <person name="Barrell B.G."/>
            <person name="Donelson J.E."/>
            <person name="Hall N."/>
            <person name="Fraser C.M."/>
            <person name="Melville S.E."/>
            <person name="El-Sayed N.M.A."/>
        </authorList>
    </citation>
    <scope>NUCLEOTIDE SEQUENCE [LARGE SCALE GENOMIC DNA]</scope>
    <source>
        <strain>927/4 GUTat10.1</strain>
    </source>
</reference>
<reference key="2">
    <citation type="journal article" date="2013" name="Mol. Microbiol.">
        <title>Trypanosoma brucei harbours a divergent XPB helicase paralogue that is specialized in nucleotide excision repair and conserved among kinetoplastid organisms.</title>
        <authorList>
            <person name="Badjatia N."/>
            <person name="Nguyen T.N."/>
            <person name="Lee J.H."/>
            <person name="Guenzl A."/>
        </authorList>
    </citation>
    <scope>FUNCTION</scope>
    <scope>DISRUPTION PHENOTYPE</scope>
</reference>
<accession>Q381F9</accession>
<proteinExistence type="inferred from homology"/>
<feature type="chain" id="PRO_0000442799" description="DNA repair helicase/translocase XPB-R">
    <location>
        <begin position="1"/>
        <end position="777"/>
    </location>
</feature>
<feature type="domain" description="Helicase ATP-binding" evidence="3">
    <location>
        <begin position="212"/>
        <end position="416"/>
    </location>
</feature>
<feature type="domain" description="Helicase C-terminal" evidence="4">
    <location>
        <begin position="484"/>
        <end position="631"/>
    </location>
</feature>
<feature type="short sequence motif" description="DEVH box" evidence="3">
    <location>
        <begin position="369"/>
        <end position="372"/>
    </location>
</feature>
<feature type="binding site" evidence="3">
    <location>
        <begin position="225"/>
        <end position="232"/>
    </location>
    <ligand>
        <name>ATP</name>
        <dbReference type="ChEBI" id="CHEBI:30616"/>
    </ligand>
</feature>
<gene>
    <name evidence="6" type="primary">XPB-R</name>
    <name type="ORF">Tb11.01.7950</name>
    <name type="ORF">Tb927.11.16270</name>
</gene>
<dbReference type="EC" id="5.6.2.4" evidence="7"/>
<dbReference type="EMBL" id="CH464491">
    <property type="protein sequence ID" value="EAN80572.1"/>
    <property type="molecule type" value="Genomic_DNA"/>
</dbReference>
<dbReference type="RefSeq" id="XP_829684.1">
    <property type="nucleotide sequence ID" value="XM_824591.1"/>
</dbReference>
<dbReference type="SMR" id="Q381F9"/>
<dbReference type="FunCoup" id="Q381F9">
    <property type="interactions" value="367"/>
</dbReference>
<dbReference type="STRING" id="185431.Q381F9"/>
<dbReference type="PaxDb" id="5691-EAN80572"/>
<dbReference type="GeneID" id="3664517"/>
<dbReference type="KEGG" id="tbr:Tb11.01.7950"/>
<dbReference type="VEuPathDB" id="TriTrypDB:Tb927.11.16270"/>
<dbReference type="eggNOG" id="KOG1123">
    <property type="taxonomic scope" value="Eukaryota"/>
</dbReference>
<dbReference type="InParanoid" id="Q381F9"/>
<dbReference type="OrthoDB" id="10262986at2759"/>
<dbReference type="Proteomes" id="UP000008524">
    <property type="component" value="Chromosome 11 Scaffold 1"/>
</dbReference>
<dbReference type="GO" id="GO:0005737">
    <property type="term" value="C:cytoplasm"/>
    <property type="evidence" value="ECO:0000314"/>
    <property type="project" value="GeneDB"/>
</dbReference>
<dbReference type="GO" id="GO:0000112">
    <property type="term" value="C:nucleotide-excision repair factor 3 complex"/>
    <property type="evidence" value="ECO:0000318"/>
    <property type="project" value="GO_Central"/>
</dbReference>
<dbReference type="GO" id="GO:0005634">
    <property type="term" value="C:nucleus"/>
    <property type="evidence" value="ECO:0000255"/>
    <property type="project" value="GeneDB"/>
</dbReference>
<dbReference type="GO" id="GO:0005675">
    <property type="term" value="C:transcription factor TFIIH holo complex"/>
    <property type="evidence" value="ECO:0000247"/>
    <property type="project" value="GeneDB"/>
</dbReference>
<dbReference type="GO" id="GO:0097550">
    <property type="term" value="C:transcription preinitiation complex"/>
    <property type="evidence" value="ECO:0000318"/>
    <property type="project" value="GO_Central"/>
</dbReference>
<dbReference type="GO" id="GO:0043138">
    <property type="term" value="F:3'-5' DNA helicase activity"/>
    <property type="evidence" value="ECO:0000318"/>
    <property type="project" value="GO_Central"/>
</dbReference>
<dbReference type="GO" id="GO:0005524">
    <property type="term" value="F:ATP binding"/>
    <property type="evidence" value="ECO:0007669"/>
    <property type="project" value="UniProtKB-KW"/>
</dbReference>
<dbReference type="GO" id="GO:0016887">
    <property type="term" value="F:ATP hydrolysis activity"/>
    <property type="evidence" value="ECO:0007669"/>
    <property type="project" value="RHEA"/>
</dbReference>
<dbReference type="GO" id="GO:0003684">
    <property type="term" value="F:damaged DNA binding"/>
    <property type="evidence" value="ECO:0000247"/>
    <property type="project" value="GeneDB"/>
</dbReference>
<dbReference type="GO" id="GO:0006281">
    <property type="term" value="P:DNA repair"/>
    <property type="evidence" value="ECO:0000247"/>
    <property type="project" value="GeneDB"/>
</dbReference>
<dbReference type="GO" id="GO:0006351">
    <property type="term" value="P:DNA-templated transcription"/>
    <property type="evidence" value="ECO:0000247"/>
    <property type="project" value="GeneDB"/>
</dbReference>
<dbReference type="GO" id="GO:0006367">
    <property type="term" value="P:transcription initiation at RNA polymerase II promoter"/>
    <property type="evidence" value="ECO:0000318"/>
    <property type="project" value="GO_Central"/>
</dbReference>
<dbReference type="CDD" id="cd18789">
    <property type="entry name" value="SF2_C_XPB"/>
    <property type="match status" value="1"/>
</dbReference>
<dbReference type="FunFam" id="3.40.50.300:FF:002931">
    <property type="entry name" value="DNA repair helicase XPB-R"/>
    <property type="match status" value="1"/>
</dbReference>
<dbReference type="Gene3D" id="3.40.50.300">
    <property type="entry name" value="P-loop containing nucleotide triphosphate hydrolases"/>
    <property type="match status" value="2"/>
</dbReference>
<dbReference type="InterPro" id="IPR050615">
    <property type="entry name" value="ATP-dep_DNA_Helicase"/>
</dbReference>
<dbReference type="InterPro" id="IPR032438">
    <property type="entry name" value="ERCC3_RAD25_C"/>
</dbReference>
<dbReference type="InterPro" id="IPR006935">
    <property type="entry name" value="Helicase/UvrB_N"/>
</dbReference>
<dbReference type="InterPro" id="IPR014001">
    <property type="entry name" value="Helicase_ATP-bd"/>
</dbReference>
<dbReference type="InterPro" id="IPR001650">
    <property type="entry name" value="Helicase_C-like"/>
</dbReference>
<dbReference type="InterPro" id="IPR027417">
    <property type="entry name" value="P-loop_NTPase"/>
</dbReference>
<dbReference type="InterPro" id="IPR032830">
    <property type="entry name" value="XPB/Ssl2_N"/>
</dbReference>
<dbReference type="PANTHER" id="PTHR11274:SF0">
    <property type="entry name" value="GENERAL TRANSCRIPTION AND DNA REPAIR FACTOR IIH HELICASE SUBUNIT XPB"/>
    <property type="match status" value="1"/>
</dbReference>
<dbReference type="PANTHER" id="PTHR11274">
    <property type="entry name" value="RAD25/XP-B DNA REPAIR HELICASE"/>
    <property type="match status" value="1"/>
</dbReference>
<dbReference type="Pfam" id="PF16203">
    <property type="entry name" value="ERCC3_RAD25_C"/>
    <property type="match status" value="1"/>
</dbReference>
<dbReference type="Pfam" id="PF13625">
    <property type="entry name" value="Helicase_C_3"/>
    <property type="match status" value="1"/>
</dbReference>
<dbReference type="Pfam" id="PF04851">
    <property type="entry name" value="ResIII"/>
    <property type="match status" value="1"/>
</dbReference>
<dbReference type="SMART" id="SM00487">
    <property type="entry name" value="DEXDc"/>
    <property type="match status" value="1"/>
</dbReference>
<dbReference type="SMART" id="SM00490">
    <property type="entry name" value="HELICc"/>
    <property type="match status" value="1"/>
</dbReference>
<dbReference type="SUPFAM" id="SSF52540">
    <property type="entry name" value="P-loop containing nucleoside triphosphate hydrolases"/>
    <property type="match status" value="1"/>
</dbReference>
<dbReference type="PROSITE" id="PS51192">
    <property type="entry name" value="HELICASE_ATP_BIND_1"/>
    <property type="match status" value="1"/>
</dbReference>
<dbReference type="PROSITE" id="PS51194">
    <property type="entry name" value="HELICASE_CTER"/>
    <property type="match status" value="1"/>
</dbReference>
<protein>
    <recommendedName>
        <fullName evidence="6">DNA repair helicase/translocase XPB-R</fullName>
        <ecNumber evidence="7">5.6.2.4</ecNumber>
    </recommendedName>
    <alternativeName>
        <fullName evidence="7">DNA 3'-5' helicase/translocase XPB-R</fullName>
    </alternativeName>
</protein>
<keyword id="KW-0067">ATP-binding</keyword>
<keyword id="KW-0227">DNA damage</keyword>
<keyword id="KW-0234">DNA repair</keyword>
<keyword id="KW-0347">Helicase</keyword>
<keyword id="KW-0378">Hydrolase</keyword>
<keyword id="KW-0413">Isomerase</keyword>
<keyword id="KW-0547">Nucleotide-binding</keyword>
<keyword id="KW-1185">Reference proteome</keyword>